<organism>
    <name type="scientific">Homo sapiens</name>
    <name type="common">Human</name>
    <dbReference type="NCBI Taxonomy" id="9606"/>
    <lineage>
        <taxon>Eukaryota</taxon>
        <taxon>Metazoa</taxon>
        <taxon>Chordata</taxon>
        <taxon>Craniata</taxon>
        <taxon>Vertebrata</taxon>
        <taxon>Euteleostomi</taxon>
        <taxon>Mammalia</taxon>
        <taxon>Eutheria</taxon>
        <taxon>Euarchontoglires</taxon>
        <taxon>Primates</taxon>
        <taxon>Haplorrhini</taxon>
        <taxon>Catarrhini</taxon>
        <taxon>Hominidae</taxon>
        <taxon>Homo</taxon>
    </lineage>
</organism>
<accession>Q9BRZ2</accession>
<accession>Q6PJS5</accession>
<accession>Q86VT6</accession>
<accession>Q8N2H8</accession>
<accession>Q8NAC0</accession>
<accession>Q9H031</accession>
<sequence length="755" mass="81488">MVSHGSSPSLLEALSSDFLACKICLEQLRAPKTLPCLHTYCQDCLAQLADGGRVRCPECRETVPVPPEGVASFKTNFFVNGLLDLVKARACGDLRAGKPACALCPLVGGTSTGGPATARCLDCADDLCQACADGHRCTRQTHTHRVVDLVGYRAGWYDEEARERQAAQCPQHPGEALRFLCQPCSQLLCRECRLDPHLDHPCLPLAEAVRARRPGLEGLLAGVDNNLVELEAARRVEKEALARLREQAARVGTQVEEAAEGVLRALLAQKQEVLGQLRAHVEAAEEAARERLAELEGREQVARAAAAFARRVLSLGREAEILSLEGAIAQRLRQLQGCPWAPGPAPCLLPQLELHPGLLDKNCHLLRLSFEEQQPQKDGGKDGAGTQGGEESQSRREDEPKTERQGGVQPQAGDGAQTPKEEKAQTTREEGAQTLEEDRAQTPHEDGGPQPHRGGRPNKKKKFKGRLKSISREPSPALGPNLDGSGLLPRPIFYCSFPTRMPGDKRSPRITGLCPFGPREILVADEQNRALKRFSLNGDYKGTVPVPEGCSPCSVAALQSAVAFSASARLYLINPNGEVQWRRALSLSQASHAVAALPSGDRVAVSVAGHVEVYNMEGSLATRFIPGGKASRGLRALVFLTTSPQGHFVGSDWQQNSVVICDGLGQVVGEYKGPGLHGCQPGSVSVDKKGYIFLTLREVNKVVILDPKGSLLGDFLTAYHGLEKPRVTTMVDGRYLVVSLSNGTIHIFRVRSPDS</sequence>
<feature type="chain" id="PRO_0000056288" description="E3 ubiquitin-protein ligase TRIM56">
    <location>
        <begin position="1"/>
        <end position="755"/>
    </location>
</feature>
<feature type="zinc finger region" description="RING-type" evidence="4">
    <location>
        <begin position="21"/>
        <end position="60"/>
    </location>
</feature>
<feature type="zinc finger region" description="B box-type 1" evidence="3">
    <location>
        <begin position="98"/>
        <end position="149"/>
    </location>
</feature>
<feature type="zinc finger region" description="B box-type 2" evidence="3">
    <location>
        <begin position="164"/>
        <end position="205"/>
    </location>
</feature>
<feature type="region of interest" description="Disordered" evidence="5">
    <location>
        <begin position="371"/>
        <end position="484"/>
    </location>
</feature>
<feature type="coiled-coil region" evidence="2">
    <location>
        <begin position="216"/>
        <end position="314"/>
    </location>
</feature>
<feature type="compositionally biased region" description="Basic and acidic residues" evidence="5">
    <location>
        <begin position="392"/>
        <end position="404"/>
    </location>
</feature>
<feature type="compositionally biased region" description="Basic and acidic residues" evidence="5">
    <location>
        <begin position="419"/>
        <end position="447"/>
    </location>
</feature>
<feature type="compositionally biased region" description="Basic residues" evidence="5">
    <location>
        <begin position="453"/>
        <end position="469"/>
    </location>
</feature>
<feature type="binding site" evidence="3">
    <location>
        <position position="169"/>
    </location>
    <ligand>
        <name>Zn(2+)</name>
        <dbReference type="ChEBI" id="CHEBI:29105"/>
    </ligand>
</feature>
<feature type="binding site" evidence="3">
    <location>
        <position position="172"/>
    </location>
    <ligand>
        <name>Zn(2+)</name>
        <dbReference type="ChEBI" id="CHEBI:29105"/>
    </ligand>
</feature>
<feature type="binding site" evidence="3">
    <location>
        <position position="192"/>
    </location>
    <ligand>
        <name>Zn(2+)</name>
        <dbReference type="ChEBI" id="CHEBI:29105"/>
    </ligand>
</feature>
<feature type="binding site" evidence="3">
    <location>
        <position position="197"/>
    </location>
    <ligand>
        <name>Zn(2+)</name>
        <dbReference type="ChEBI" id="CHEBI:29105"/>
    </ligand>
</feature>
<feature type="modified residue" description="Phosphothreonine" evidence="19 20 21">
    <location>
        <position position="418"/>
    </location>
</feature>
<feature type="modified residue" description="Phosphothreonine" evidence="19 20">
    <location>
        <position position="442"/>
    </location>
</feature>
<feature type="modified residue" description="Phosphoserine" evidence="18 19">
    <location>
        <position position="475"/>
    </location>
</feature>
<feature type="splice variant" id="VSP_029109" description="In isoform 3." evidence="12">
    <original>AEGVLRALLAQ</original>
    <variation>CLLRTESCKAE</variation>
    <location>
        <begin position="259"/>
        <end position="269"/>
    </location>
</feature>
<feature type="splice variant" id="VSP_029110" description="In isoform 3." evidence="12">
    <location>
        <begin position="270"/>
        <end position="755"/>
    </location>
</feature>
<feature type="splice variant" id="VSP_029111" description="In isoform 2." evidence="13">
    <original>VLGQLRAHVEAAEEAARERLAELEGREQVARAAAAF</original>
    <variation>NHLNPGGGSCSELRSHHCTPAWVTRMKLHLKKKKKK</variation>
    <location>
        <begin position="273"/>
        <end position="308"/>
    </location>
</feature>
<feature type="splice variant" id="VSP_029112" description="In isoform 2." evidence="13">
    <location>
        <begin position="309"/>
        <end position="755"/>
    </location>
</feature>
<feature type="mutagenesis site" description="Complete loss of autoubiquitination. Complete loss of autoubiquitination, loss of antiviral activity against yellow fever virus and human coronavirus virus OC43, but normal induction of interferon-beta following Sendai virus infection; when associated with A-24." evidence="6">
    <original>C</original>
    <variation>A</variation>
    <location>
        <position position="21"/>
    </location>
</feature>
<feature type="mutagenesis site" description="Complete loss of autoubiquitination, loss of antiviral activity against yellow fever virus and human coronavirus virus OC43, but normal induction of interferon-beta following Sendia virus infection; when associated with A-24." evidence="6">
    <original>C</original>
    <variation>A</variation>
    <location>
        <position position="24"/>
    </location>
</feature>
<feature type="sequence conflict" description="In Ref. 1; AK092927." evidence="15" ref="1">
    <original>L</original>
    <variation>P</variation>
    <location>
        <position position="230"/>
    </location>
</feature>
<feature type="turn" evidence="22">
    <location>
        <begin position="22"/>
        <end position="24"/>
    </location>
</feature>
<feature type="helix" evidence="22">
    <location>
        <begin position="42"/>
        <end position="48"/>
    </location>
</feature>
<feature type="strand" evidence="22">
    <location>
        <begin position="57"/>
        <end position="59"/>
    </location>
</feature>
<feature type="strand" evidence="22">
    <location>
        <begin position="66"/>
        <end position="69"/>
    </location>
</feature>
<keyword id="KW-0002">3D-structure</keyword>
<keyword id="KW-0025">Alternative splicing</keyword>
<keyword id="KW-0051">Antiviral defense</keyword>
<keyword id="KW-0175">Coiled coil</keyword>
<keyword id="KW-0963">Cytoplasm</keyword>
<keyword id="KW-0391">Immunity</keyword>
<keyword id="KW-0399">Innate immunity</keyword>
<keyword id="KW-0479">Metal-binding</keyword>
<keyword id="KW-0597">Phosphoprotein</keyword>
<keyword id="KW-1267">Proteomics identification</keyword>
<keyword id="KW-1185">Reference proteome</keyword>
<keyword id="KW-0677">Repeat</keyword>
<keyword id="KW-0808">Transferase</keyword>
<keyword id="KW-0832">Ubl conjugation</keyword>
<keyword id="KW-0833">Ubl conjugation pathway</keyword>
<keyword id="KW-0862">Zinc</keyword>
<keyword id="KW-0863">Zinc-finger</keyword>
<protein>
    <recommendedName>
        <fullName evidence="15">E3 ubiquitin-protein ligase TRIM56</fullName>
        <ecNumber evidence="6">2.3.2.27</ecNumber>
    </recommendedName>
    <alternativeName>
        <fullName>RING finger protein 109</fullName>
    </alternativeName>
    <alternativeName>
        <fullName>Tripartite motif-containing protein 56</fullName>
    </alternativeName>
</protein>
<comment type="function">
    <text evidence="1 6 7 9 10 11">E3 ubiquitin-protein ligase that plays a key role in innate antiviral immunity by mediating ubiquitination of CGAS and STING1 (PubMed:21289118, PubMed:29426904). In response to pathogen- and host-derived double-stranded DNA (dsDNA), targets STING1 to 'Lys-63'-linked ubiquitination, thereby promoting its homodimerization, a step required for the production of type I interferon IFN-beta (By similarity). Also mediate monoubiquitination of CGAS, thereby promoting CGAS oligomerization and subsequent activation (PubMed:29426904). Promotes also TNFalpha-induced NF-kappa-B signaling by mediating 'Lys-63'-linked ubiquitination TAK1, leading to enhanced interaction between TAK1 and CHUK/IKKalpha (PubMed:35952808). Independently of its E3 ubiquitin ligase activity, positive regulator of TLR3 signaling. Potentiates extracellular double stranded RNA (dsRNA)-induced expression of IFNB1 and interferon-stimulated genes ISG15, IFIT1/ISG56, CXCL10, OASL and CCL5/RANTES (PubMed:22948160). Promotes establishment of an antiviral state by TLR3 ligand and TLR3-mediated chemokine induction following infection by hepatitis C virus (PubMed:22948160). Acts as a restriction factor of Zika virus through direct interaction with the viral RNA via its C-terminal region (PubMed:31251739).</text>
</comment>
<comment type="catalytic activity">
    <reaction evidence="6">
        <text>S-ubiquitinyl-[E2 ubiquitin-conjugating enzyme]-L-cysteine + [acceptor protein]-L-lysine = [E2 ubiquitin-conjugating enzyme]-L-cysteine + N(6)-ubiquitinyl-[acceptor protein]-L-lysine.</text>
        <dbReference type="EC" id="2.3.2.27"/>
    </reaction>
</comment>
<comment type="pathway">
    <text evidence="6 9">Protein modification; protein ubiquitination.</text>
</comment>
<comment type="subunit">
    <text evidence="1 7">Homooligomer. Interacts with STING1 (By similarity). Interacts with TICAM1 (PubMed:22948160).</text>
</comment>
<comment type="interaction">
    <interactant intactId="EBI-1048636">
        <id>Q9BRZ2</id>
    </interactant>
    <interactant intactId="EBI-525995">
        <id>Q8IUC6</id>
        <label>TICAM1</label>
    </interactant>
    <organismsDiffer>false</organismsDiffer>
    <experiments>2</experiments>
</comment>
<comment type="subcellular location">
    <subcellularLocation>
        <location evidence="6">Cytoplasm</location>
    </subcellularLocation>
</comment>
<comment type="alternative products">
    <event type="alternative splicing"/>
    <isoform>
        <id>Q9BRZ2-1</id>
        <name>1</name>
        <sequence type="displayed"/>
    </isoform>
    <isoform>
        <id>Q9BRZ2-2</id>
        <name>2</name>
        <sequence type="described" ref="VSP_029111 VSP_029112"/>
    </isoform>
    <isoform>
        <id>Q9BRZ2-3</id>
        <name>3</name>
        <sequence type="described" ref="VSP_029109 VSP_029110"/>
    </isoform>
</comment>
<comment type="tissue specificity">
    <text evidence="6">Widely expressed (at protein level).</text>
</comment>
<comment type="induction">
    <text evidence="6">Up-regulated by IFN-alpha.</text>
</comment>
<comment type="PTM">
    <text evidence="8">(Microbial infection) Preferentially ubiquitinated with 'Lys-48' and 'Lys-11'-linked ubiquitin chains by Salmonella effector SopA leading to proteasomal targeting and degradation.</text>
</comment>
<comment type="PTM">
    <text evidence="6">Autoubiquitinated.</text>
</comment>
<comment type="similarity">
    <text evidence="15">Belongs to the TRIM/RBCC family.</text>
</comment>
<comment type="sequence caution" evidence="15">
    <conflict type="erroneous initiation">
        <sequence resource="EMBL-CDS" id="AAH11882"/>
    </conflict>
    <text>Extended N-terminus.</text>
</comment>
<comment type="sequence caution" evidence="15">
    <conflict type="erroneous initiation">
        <sequence resource="EMBL-CDS" id="BAC11500"/>
    </conflict>
    <text>Truncated N-terminus.</text>
</comment>
<reference key="1">
    <citation type="journal article" date="2004" name="Nat. Genet.">
        <title>Complete sequencing and characterization of 21,243 full-length human cDNAs.</title>
        <authorList>
            <person name="Ota T."/>
            <person name="Suzuki Y."/>
            <person name="Nishikawa T."/>
            <person name="Otsuki T."/>
            <person name="Sugiyama T."/>
            <person name="Irie R."/>
            <person name="Wakamatsu A."/>
            <person name="Hayashi K."/>
            <person name="Sato H."/>
            <person name="Nagai K."/>
            <person name="Kimura K."/>
            <person name="Makita H."/>
            <person name="Sekine M."/>
            <person name="Obayashi M."/>
            <person name="Nishi T."/>
            <person name="Shibahara T."/>
            <person name="Tanaka T."/>
            <person name="Ishii S."/>
            <person name="Yamamoto J."/>
            <person name="Saito K."/>
            <person name="Kawai Y."/>
            <person name="Isono Y."/>
            <person name="Nakamura Y."/>
            <person name="Nagahari K."/>
            <person name="Murakami K."/>
            <person name="Yasuda T."/>
            <person name="Iwayanagi T."/>
            <person name="Wagatsuma M."/>
            <person name="Shiratori A."/>
            <person name="Sudo H."/>
            <person name="Hosoiri T."/>
            <person name="Kaku Y."/>
            <person name="Kodaira H."/>
            <person name="Kondo H."/>
            <person name="Sugawara M."/>
            <person name="Takahashi M."/>
            <person name="Kanda K."/>
            <person name="Yokoi T."/>
            <person name="Furuya T."/>
            <person name="Kikkawa E."/>
            <person name="Omura Y."/>
            <person name="Abe K."/>
            <person name="Kamihara K."/>
            <person name="Katsuta N."/>
            <person name="Sato K."/>
            <person name="Tanikawa M."/>
            <person name="Yamazaki M."/>
            <person name="Ninomiya K."/>
            <person name="Ishibashi T."/>
            <person name="Yamashita H."/>
            <person name="Murakawa K."/>
            <person name="Fujimori K."/>
            <person name="Tanai H."/>
            <person name="Kimata M."/>
            <person name="Watanabe M."/>
            <person name="Hiraoka S."/>
            <person name="Chiba Y."/>
            <person name="Ishida S."/>
            <person name="Ono Y."/>
            <person name="Takiguchi S."/>
            <person name="Watanabe S."/>
            <person name="Yosida M."/>
            <person name="Hotuta T."/>
            <person name="Kusano J."/>
            <person name="Kanehori K."/>
            <person name="Takahashi-Fujii A."/>
            <person name="Hara H."/>
            <person name="Tanase T.-O."/>
            <person name="Nomura Y."/>
            <person name="Togiya S."/>
            <person name="Komai F."/>
            <person name="Hara R."/>
            <person name="Takeuchi K."/>
            <person name="Arita M."/>
            <person name="Imose N."/>
            <person name="Musashino K."/>
            <person name="Yuuki H."/>
            <person name="Oshima A."/>
            <person name="Sasaki N."/>
            <person name="Aotsuka S."/>
            <person name="Yoshikawa Y."/>
            <person name="Matsunawa H."/>
            <person name="Ichihara T."/>
            <person name="Shiohata N."/>
            <person name="Sano S."/>
            <person name="Moriya S."/>
            <person name="Momiyama H."/>
            <person name="Satoh N."/>
            <person name="Takami S."/>
            <person name="Terashima Y."/>
            <person name="Suzuki O."/>
            <person name="Nakagawa S."/>
            <person name="Senoh A."/>
            <person name="Mizoguchi H."/>
            <person name="Goto Y."/>
            <person name="Shimizu F."/>
            <person name="Wakebe H."/>
            <person name="Hishigaki H."/>
            <person name="Watanabe T."/>
            <person name="Sugiyama A."/>
            <person name="Takemoto M."/>
            <person name="Kawakami B."/>
            <person name="Yamazaki M."/>
            <person name="Watanabe K."/>
            <person name="Kumagai A."/>
            <person name="Itakura S."/>
            <person name="Fukuzumi Y."/>
            <person name="Fujimori Y."/>
            <person name="Komiyama M."/>
            <person name="Tashiro H."/>
            <person name="Tanigami A."/>
            <person name="Fujiwara T."/>
            <person name="Ono T."/>
            <person name="Yamada K."/>
            <person name="Fujii Y."/>
            <person name="Ozaki K."/>
            <person name="Hirao M."/>
            <person name="Ohmori Y."/>
            <person name="Kawabata A."/>
            <person name="Hikiji T."/>
            <person name="Kobatake N."/>
            <person name="Inagaki H."/>
            <person name="Ikema Y."/>
            <person name="Okamoto S."/>
            <person name="Okitani R."/>
            <person name="Kawakami T."/>
            <person name="Noguchi S."/>
            <person name="Itoh T."/>
            <person name="Shigeta K."/>
            <person name="Senba T."/>
            <person name="Matsumura K."/>
            <person name="Nakajima Y."/>
            <person name="Mizuno T."/>
            <person name="Morinaga M."/>
            <person name="Sasaki M."/>
            <person name="Togashi T."/>
            <person name="Oyama M."/>
            <person name="Hata H."/>
            <person name="Watanabe M."/>
            <person name="Komatsu T."/>
            <person name="Mizushima-Sugano J."/>
            <person name="Satoh T."/>
            <person name="Shirai Y."/>
            <person name="Takahashi Y."/>
            <person name="Nakagawa K."/>
            <person name="Okumura K."/>
            <person name="Nagase T."/>
            <person name="Nomura N."/>
            <person name="Kikuchi H."/>
            <person name="Masuho Y."/>
            <person name="Yamashita R."/>
            <person name="Nakai K."/>
            <person name="Yada T."/>
            <person name="Nakamura Y."/>
            <person name="Ohara O."/>
            <person name="Isogai T."/>
            <person name="Sugano S."/>
        </authorList>
    </citation>
    <scope>NUCLEOTIDE SEQUENCE [LARGE SCALE MRNA] (ISOFORM 3)</scope>
    <scope>NUCLEOTIDE SEQUENCE [LARGE SCALE MRNA] OF 429-755 (ISOFORM 1)</scope>
    <source>
        <tissue>Spleen</tissue>
        <tissue>Thyroid</tissue>
    </source>
</reference>
<reference key="2">
    <citation type="journal article" date="2003" name="Nature">
        <title>The DNA sequence of human chromosome 7.</title>
        <authorList>
            <person name="Hillier L.W."/>
            <person name="Fulton R.S."/>
            <person name="Fulton L.A."/>
            <person name="Graves T.A."/>
            <person name="Pepin K.H."/>
            <person name="Wagner-McPherson C."/>
            <person name="Layman D."/>
            <person name="Maas J."/>
            <person name="Jaeger S."/>
            <person name="Walker R."/>
            <person name="Wylie K."/>
            <person name="Sekhon M."/>
            <person name="Becker M.C."/>
            <person name="O'Laughlin M.D."/>
            <person name="Schaller M.E."/>
            <person name="Fewell G.A."/>
            <person name="Delehaunty K.D."/>
            <person name="Miner T.L."/>
            <person name="Nash W.E."/>
            <person name="Cordes M."/>
            <person name="Du H."/>
            <person name="Sun H."/>
            <person name="Edwards J."/>
            <person name="Bradshaw-Cordum H."/>
            <person name="Ali J."/>
            <person name="Andrews S."/>
            <person name="Isak A."/>
            <person name="Vanbrunt A."/>
            <person name="Nguyen C."/>
            <person name="Du F."/>
            <person name="Lamar B."/>
            <person name="Courtney L."/>
            <person name="Kalicki J."/>
            <person name="Ozersky P."/>
            <person name="Bielicki L."/>
            <person name="Scott K."/>
            <person name="Holmes A."/>
            <person name="Harkins R."/>
            <person name="Harris A."/>
            <person name="Strong C.M."/>
            <person name="Hou S."/>
            <person name="Tomlinson C."/>
            <person name="Dauphin-Kohlberg S."/>
            <person name="Kozlowicz-Reilly A."/>
            <person name="Leonard S."/>
            <person name="Rohlfing T."/>
            <person name="Rock S.M."/>
            <person name="Tin-Wollam A.-M."/>
            <person name="Abbott A."/>
            <person name="Minx P."/>
            <person name="Maupin R."/>
            <person name="Strowmatt C."/>
            <person name="Latreille P."/>
            <person name="Miller N."/>
            <person name="Johnson D."/>
            <person name="Murray J."/>
            <person name="Woessner J.P."/>
            <person name="Wendl M.C."/>
            <person name="Yang S.-P."/>
            <person name="Schultz B.R."/>
            <person name="Wallis J.W."/>
            <person name="Spieth J."/>
            <person name="Bieri T.A."/>
            <person name="Nelson J.O."/>
            <person name="Berkowicz N."/>
            <person name="Wohldmann P.E."/>
            <person name="Cook L.L."/>
            <person name="Hickenbotham M.T."/>
            <person name="Eldred J."/>
            <person name="Williams D."/>
            <person name="Bedell J.A."/>
            <person name="Mardis E.R."/>
            <person name="Clifton S.W."/>
            <person name="Chissoe S.L."/>
            <person name="Marra M.A."/>
            <person name="Raymond C."/>
            <person name="Haugen E."/>
            <person name="Gillett W."/>
            <person name="Zhou Y."/>
            <person name="James R."/>
            <person name="Phelps K."/>
            <person name="Iadanoto S."/>
            <person name="Bubb K."/>
            <person name="Simms E."/>
            <person name="Levy R."/>
            <person name="Clendenning J."/>
            <person name="Kaul R."/>
            <person name="Kent W.J."/>
            <person name="Furey T.S."/>
            <person name="Baertsch R.A."/>
            <person name="Brent M.R."/>
            <person name="Keibler E."/>
            <person name="Flicek P."/>
            <person name="Bork P."/>
            <person name="Suyama M."/>
            <person name="Bailey J.A."/>
            <person name="Portnoy M.E."/>
            <person name="Torrents D."/>
            <person name="Chinwalla A.T."/>
            <person name="Gish W.R."/>
            <person name="Eddy S.R."/>
            <person name="McPherson J.D."/>
            <person name="Olson M.V."/>
            <person name="Eichler E.E."/>
            <person name="Green E.D."/>
            <person name="Waterston R.H."/>
            <person name="Wilson R.K."/>
        </authorList>
    </citation>
    <scope>NUCLEOTIDE SEQUENCE [LARGE SCALE GENOMIC DNA]</scope>
</reference>
<reference key="3">
    <citation type="journal article" date="2004" name="Genome Res.">
        <title>The status, quality, and expansion of the NIH full-length cDNA project: the Mammalian Gene Collection (MGC).</title>
        <authorList>
            <consortium name="The MGC Project Team"/>
        </authorList>
    </citation>
    <scope>NUCLEOTIDE SEQUENCE [LARGE SCALE MRNA] (ISOFORMS 1 AND 2)</scope>
    <source>
        <tissue>Lymph</tissue>
        <tissue>Placenta</tissue>
    </source>
</reference>
<reference key="4">
    <citation type="journal article" date="2007" name="BMC Genomics">
        <title>The full-ORF clone resource of the German cDNA consortium.</title>
        <authorList>
            <person name="Bechtel S."/>
            <person name="Rosenfelder H."/>
            <person name="Duda A."/>
            <person name="Schmidt C.P."/>
            <person name="Ernst U."/>
            <person name="Wellenreuther R."/>
            <person name="Mehrle A."/>
            <person name="Schuster C."/>
            <person name="Bahr A."/>
            <person name="Bloecker H."/>
            <person name="Heubner D."/>
            <person name="Hoerlein A."/>
            <person name="Michel G."/>
            <person name="Wedler H."/>
            <person name="Koehrer K."/>
            <person name="Ottenwaelder B."/>
            <person name="Poustka A."/>
            <person name="Wiemann S."/>
            <person name="Schupp I."/>
        </authorList>
    </citation>
    <scope>NUCLEOTIDE SEQUENCE [LARGE SCALE MRNA] OF 572-755 (ISOFORM 1)</scope>
    <source>
        <tissue>Lymph node</tissue>
    </source>
</reference>
<reference key="5">
    <citation type="journal article" date="2006" name="Cell">
        <title>Global, in vivo, and site-specific phosphorylation dynamics in signaling networks.</title>
        <authorList>
            <person name="Olsen J.V."/>
            <person name="Blagoev B."/>
            <person name="Gnad F."/>
            <person name="Macek B."/>
            <person name="Kumar C."/>
            <person name="Mortensen P."/>
            <person name="Mann M."/>
        </authorList>
    </citation>
    <scope>PHOSPHORYLATION [LARGE SCALE ANALYSIS] AT SER-475</scope>
    <scope>IDENTIFICATION BY MASS SPECTROMETRY [LARGE SCALE ANALYSIS]</scope>
    <source>
        <tissue>Cervix carcinoma</tissue>
    </source>
</reference>
<reference key="6">
    <citation type="journal article" date="2008" name="Mol. Cell">
        <title>Kinase-selective enrichment enables quantitative phosphoproteomics of the kinome across the cell cycle.</title>
        <authorList>
            <person name="Daub H."/>
            <person name="Olsen J.V."/>
            <person name="Bairlein M."/>
            <person name="Gnad F."/>
            <person name="Oppermann F.S."/>
            <person name="Korner R."/>
            <person name="Greff Z."/>
            <person name="Keri G."/>
            <person name="Stemmann O."/>
            <person name="Mann M."/>
        </authorList>
    </citation>
    <scope>PHOSPHORYLATION [LARGE SCALE ANALYSIS] AT THR-418; THR-442 AND SER-475</scope>
    <scope>IDENTIFICATION BY MASS SPECTROMETRY [LARGE SCALE ANALYSIS]</scope>
    <source>
        <tissue>Cervix carcinoma</tissue>
    </source>
</reference>
<reference key="7">
    <citation type="journal article" date="2011" name="J. Virol.">
        <title>TRIM56 is a virus- and interferon-inducible E3 ubiquitin ligase that restricts pestivirus infection.</title>
        <authorList>
            <person name="Wang J."/>
            <person name="Liu B."/>
            <person name="Wang N."/>
            <person name="Lee Y.M."/>
            <person name="Liu C."/>
            <person name="Li K."/>
        </authorList>
    </citation>
    <scope>FUNCTION</scope>
    <scope>HOMOOLIGOMERIZATION</scope>
    <scope>SUBCELLULAR LOCATION</scope>
    <scope>TISSUE SPECIFICITY</scope>
    <scope>AUTOUBIQUITINATION</scope>
    <scope>INDUCTION BY IFN-ALPHA</scope>
    <scope>MUTAGENESIS OF CYS-21 AND CYS-24</scope>
</reference>
<reference key="8">
    <citation type="journal article" date="2012" name="J. Biol. Chem.">
        <title>TRIM56 is an essential component of the TLR3 antiviral signaling pathway.</title>
        <authorList>
            <person name="Shen Y."/>
            <person name="Li N.L."/>
            <person name="Wang J."/>
            <person name="Liu B."/>
            <person name="Lester S."/>
            <person name="Li K."/>
        </authorList>
    </citation>
    <scope>FUNCTION</scope>
    <scope>INTERACTION WITH TICAM1</scope>
</reference>
<reference key="9">
    <citation type="journal article" date="2013" name="J. Proteome Res.">
        <title>Toward a comprehensive characterization of a human cancer cell phosphoproteome.</title>
        <authorList>
            <person name="Zhou H."/>
            <person name="Di Palma S."/>
            <person name="Preisinger C."/>
            <person name="Peng M."/>
            <person name="Polat A.N."/>
            <person name="Heck A.J."/>
            <person name="Mohammed S."/>
        </authorList>
    </citation>
    <scope>PHOSPHORYLATION [LARGE SCALE ANALYSIS] AT THR-418 AND THR-442</scope>
    <scope>IDENTIFICATION BY MASS SPECTROMETRY [LARGE SCALE ANALYSIS]</scope>
    <source>
        <tissue>Cervix carcinoma</tissue>
        <tissue>Erythroleukemia</tissue>
    </source>
</reference>
<reference key="10">
    <citation type="journal article" date="2014" name="J. Proteomics">
        <title>An enzyme assisted RP-RPLC approach for in-depth analysis of human liver phosphoproteome.</title>
        <authorList>
            <person name="Bian Y."/>
            <person name="Song C."/>
            <person name="Cheng K."/>
            <person name="Dong M."/>
            <person name="Wang F."/>
            <person name="Huang J."/>
            <person name="Sun D."/>
            <person name="Wang L."/>
            <person name="Ye M."/>
            <person name="Zou H."/>
        </authorList>
    </citation>
    <scope>PHOSPHORYLATION [LARGE SCALE ANALYSIS] AT THR-418</scope>
    <scope>IDENTIFICATION BY MASS SPECTROMETRY [LARGE SCALE ANALYSIS]</scope>
    <source>
        <tissue>Liver</tissue>
    </source>
</reference>
<reference key="11">
    <citation type="journal article" date="2014" name="J. Virol.">
        <title>Overlapping and distinct molecular determinants dictating the antiviral activities of TRIM56 against flaviviruses and coronavirus.</title>
        <authorList>
            <person name="Liu B."/>
            <person name="Li N.L."/>
            <person name="Wang J."/>
            <person name="Shi P.Y."/>
            <person name="Wang T."/>
            <person name="Miller M.A."/>
            <person name="Li K."/>
        </authorList>
    </citation>
    <scope>FUNCTION</scope>
    <scope>MUTAGENESIS OF CYS-21 AND CYS-24</scope>
</reference>
<reference key="12">
    <citation type="journal article" date="2018" name="Nat. Commun.">
        <title>TRIM56-mediated monoubiquitination of cGAS for cytosolic DNA sensing.</title>
        <authorList>
            <person name="Seo G.J."/>
            <person name="Kim C."/>
            <person name="Shin W.J."/>
            <person name="Sklan E.H."/>
            <person name="Eoh H."/>
            <person name="Jung J.U."/>
        </authorList>
    </citation>
    <scope>FUNCTION</scope>
    <scope>PATHWAY</scope>
</reference>
<reference key="13">
    <citation type="journal article" date="2019" name="PLoS Negl. Trop. Dis.">
        <title>The E3 ligase TRIM56 is a host restriction factor of Zika virus and depends on its RNA-binding activity but not miRNA regulation, for antiviral function.</title>
        <authorList>
            <person name="Yang D."/>
            <person name="Li N.L."/>
            <person name="Wei D."/>
            <person name="Liu B."/>
            <person name="Guo F."/>
            <person name="Elbahesh H."/>
            <person name="Zhang Y."/>
            <person name="Zhou Z."/>
            <person name="Chen G.Y."/>
            <person name="Li K."/>
        </authorList>
    </citation>
    <scope>FUNCTION</scope>
</reference>
<reference key="14">
    <citation type="journal article" date="2022" name="Int. J. Biol. Macromol.">
        <title>TRIM56 positively regulates TNFalpha-induced NF-kappaB signaling by enhancing the ubiquitination of TAK1.</title>
        <authorList>
            <person name="Liu Y."/>
            <person name="Chen Y."/>
            <person name="Ding C."/>
            <person name="Zhu X."/>
            <person name="Song X."/>
            <person name="Ren Y."/>
            <person name="Wang Q."/>
            <person name="Zhang Y."/>
            <person name="Sun X."/>
        </authorList>
    </citation>
    <scope>FUNCTION</scope>
</reference>
<reference evidence="17" key="15">
    <citation type="journal article" date="2017" name="Nat. Commun.">
        <title>Structural basis for the recognition and degradation of host TRIM proteins by Salmonella effector SopA.</title>
        <authorList>
            <person name="Fiskin E."/>
            <person name="Bhogaraju S."/>
            <person name="Herhaus L."/>
            <person name="Kalayil S."/>
            <person name="Hahn M."/>
            <person name="Dikic I."/>
        </authorList>
    </citation>
    <scope>X-RAY CRYSTALLOGRAPHY (2.85 ANGSTROMS) OF 1-93</scope>
    <scope>UBIQUITINATION BY SALMONELLA TYPHIMURIUM SOPA (MICROBIAL INFECTION)</scope>
</reference>
<name>TRI56_HUMAN</name>
<dbReference type="EC" id="2.3.2.27" evidence="6"/>
<dbReference type="EMBL" id="AK075255">
    <property type="protein sequence ID" value="BAC11500.1"/>
    <property type="status" value="ALT_INIT"/>
    <property type="molecule type" value="mRNA"/>
</dbReference>
<dbReference type="EMBL" id="AK092927">
    <property type="status" value="NOT_ANNOTATED_CDS"/>
    <property type="molecule type" value="mRNA"/>
</dbReference>
<dbReference type="EMBL" id="AC105446">
    <property type="status" value="NOT_ANNOTATED_CDS"/>
    <property type="molecule type" value="Genomic_DNA"/>
</dbReference>
<dbReference type="EMBL" id="BC005847">
    <property type="protein sequence ID" value="AAH05847.3"/>
    <property type="molecule type" value="mRNA"/>
</dbReference>
<dbReference type="EMBL" id="BC011882">
    <property type="protein sequence ID" value="AAH11882.1"/>
    <property type="status" value="ALT_INIT"/>
    <property type="molecule type" value="mRNA"/>
</dbReference>
<dbReference type="EMBL" id="BC048194">
    <property type="protein sequence ID" value="AAH48194.1"/>
    <property type="molecule type" value="mRNA"/>
</dbReference>
<dbReference type="EMBL" id="AL512757">
    <property type="protein sequence ID" value="CAC21676.1"/>
    <property type="molecule type" value="mRNA"/>
</dbReference>
<dbReference type="CCDS" id="CCDS43625.1">
    <molecule id="Q9BRZ2-1"/>
</dbReference>
<dbReference type="RefSeq" id="NP_112223.1">
    <molecule id="Q9BRZ2-1"/>
    <property type="nucleotide sequence ID" value="NM_030961.3"/>
</dbReference>
<dbReference type="RefSeq" id="XP_011514891.1">
    <molecule id="Q9BRZ2-1"/>
    <property type="nucleotide sequence ID" value="XM_011516589.4"/>
</dbReference>
<dbReference type="RefSeq" id="XP_054215089.1">
    <molecule id="Q9BRZ2-1"/>
    <property type="nucleotide sequence ID" value="XM_054359114.1"/>
</dbReference>
<dbReference type="PDB" id="5JW7">
    <property type="method" value="X-ray"/>
    <property type="resolution" value="2.85 A"/>
    <property type="chains" value="B=1-93"/>
</dbReference>
<dbReference type="PDBsum" id="5JW7"/>
<dbReference type="SMR" id="Q9BRZ2"/>
<dbReference type="BioGRID" id="123596">
    <property type="interactions" value="168"/>
</dbReference>
<dbReference type="FunCoup" id="Q9BRZ2">
    <property type="interactions" value="642"/>
</dbReference>
<dbReference type="IntAct" id="Q9BRZ2">
    <property type="interactions" value="41"/>
</dbReference>
<dbReference type="STRING" id="9606.ENSP00000305161"/>
<dbReference type="GlyGen" id="Q9BRZ2">
    <property type="glycosylation" value="3 sites, 1 O-linked glycan (3 sites)"/>
</dbReference>
<dbReference type="iPTMnet" id="Q9BRZ2"/>
<dbReference type="PhosphoSitePlus" id="Q9BRZ2"/>
<dbReference type="SwissPalm" id="Q9BRZ2"/>
<dbReference type="BioMuta" id="TRIM56"/>
<dbReference type="DMDM" id="56749788"/>
<dbReference type="jPOST" id="Q9BRZ2"/>
<dbReference type="MassIVE" id="Q9BRZ2"/>
<dbReference type="PaxDb" id="9606-ENSP00000305161"/>
<dbReference type="PeptideAtlas" id="Q9BRZ2"/>
<dbReference type="ProteomicsDB" id="78854">
    <molecule id="Q9BRZ2-1"/>
</dbReference>
<dbReference type="ProteomicsDB" id="78855">
    <molecule id="Q9BRZ2-2"/>
</dbReference>
<dbReference type="ProteomicsDB" id="78856">
    <molecule id="Q9BRZ2-3"/>
</dbReference>
<dbReference type="Pumba" id="Q9BRZ2"/>
<dbReference type="Antibodypedia" id="9103">
    <property type="antibodies" value="165 antibodies from 22 providers"/>
</dbReference>
<dbReference type="DNASU" id="81844"/>
<dbReference type="Ensembl" id="ENST00000306085.11">
    <molecule id="Q9BRZ2-1"/>
    <property type="protein sequence ID" value="ENSP00000305161.6"/>
    <property type="gene ID" value="ENSG00000169871.13"/>
</dbReference>
<dbReference type="GeneID" id="81844"/>
<dbReference type="KEGG" id="hsa:81844"/>
<dbReference type="MANE-Select" id="ENST00000306085.11">
    <property type="protein sequence ID" value="ENSP00000305161.6"/>
    <property type="RefSeq nucleotide sequence ID" value="NM_030961.3"/>
    <property type="RefSeq protein sequence ID" value="NP_112223.1"/>
</dbReference>
<dbReference type="UCSC" id="uc003uxq.4">
    <molecule id="Q9BRZ2-1"/>
    <property type="organism name" value="human"/>
</dbReference>
<dbReference type="AGR" id="HGNC:19028"/>
<dbReference type="CTD" id="81844"/>
<dbReference type="DisGeNET" id="81844"/>
<dbReference type="GeneCards" id="TRIM56"/>
<dbReference type="HGNC" id="HGNC:19028">
    <property type="gene designation" value="TRIM56"/>
</dbReference>
<dbReference type="HPA" id="ENSG00000169871">
    <property type="expression patterns" value="Low tissue specificity"/>
</dbReference>
<dbReference type="MIM" id="616996">
    <property type="type" value="gene"/>
</dbReference>
<dbReference type="neXtProt" id="NX_Q9BRZ2"/>
<dbReference type="OpenTargets" id="ENSG00000169871"/>
<dbReference type="PharmGKB" id="PA134958549"/>
<dbReference type="VEuPathDB" id="HostDB:ENSG00000169871"/>
<dbReference type="eggNOG" id="KOG2177">
    <property type="taxonomic scope" value="Eukaryota"/>
</dbReference>
<dbReference type="GeneTree" id="ENSGT00940000162489"/>
<dbReference type="HOGENOM" id="CLU_008645_6_1_1"/>
<dbReference type="InParanoid" id="Q9BRZ2"/>
<dbReference type="OMA" id="LQGCPWM"/>
<dbReference type="OrthoDB" id="264520at2759"/>
<dbReference type="PAN-GO" id="Q9BRZ2">
    <property type="GO annotations" value="5 GO annotations based on evolutionary models"/>
</dbReference>
<dbReference type="PhylomeDB" id="Q9BRZ2"/>
<dbReference type="TreeFam" id="TF338323"/>
<dbReference type="PathwayCommons" id="Q9BRZ2"/>
<dbReference type="Reactome" id="R-HSA-3134975">
    <property type="pathway name" value="Regulation of innate immune responses to cytosolic DNA"/>
</dbReference>
<dbReference type="SignaLink" id="Q9BRZ2"/>
<dbReference type="SIGNOR" id="Q9BRZ2"/>
<dbReference type="UniPathway" id="UPA00143"/>
<dbReference type="BioGRID-ORCS" id="81844">
    <property type="hits" value="10 hits in 1200 CRISPR screens"/>
</dbReference>
<dbReference type="CD-CODE" id="232F8A39">
    <property type="entry name" value="P-body"/>
</dbReference>
<dbReference type="CD-CODE" id="DEE660B4">
    <property type="entry name" value="Stress granule"/>
</dbReference>
<dbReference type="ChiTaRS" id="TRIM56">
    <property type="organism name" value="human"/>
</dbReference>
<dbReference type="GenomeRNAi" id="81844"/>
<dbReference type="Pharos" id="Q9BRZ2">
    <property type="development level" value="Tbio"/>
</dbReference>
<dbReference type="PRO" id="PR:Q9BRZ2"/>
<dbReference type="Proteomes" id="UP000005640">
    <property type="component" value="Chromosome 7"/>
</dbReference>
<dbReference type="RNAct" id="Q9BRZ2">
    <property type="molecule type" value="protein"/>
</dbReference>
<dbReference type="Bgee" id="ENSG00000169871">
    <property type="expression patterns" value="Expressed in tendon of biceps brachii and 196 other cell types or tissues"/>
</dbReference>
<dbReference type="ExpressionAtlas" id="Q9BRZ2">
    <property type="expression patterns" value="baseline and differential"/>
</dbReference>
<dbReference type="GO" id="GO:0005737">
    <property type="term" value="C:cytoplasm"/>
    <property type="evidence" value="ECO:0000250"/>
    <property type="project" value="UniProtKB"/>
</dbReference>
<dbReference type="GO" id="GO:0005829">
    <property type="term" value="C:cytosol"/>
    <property type="evidence" value="ECO:0000304"/>
    <property type="project" value="Reactome"/>
</dbReference>
<dbReference type="GO" id="GO:0005654">
    <property type="term" value="C:nucleoplasm"/>
    <property type="evidence" value="ECO:0000318"/>
    <property type="project" value="GO_Central"/>
</dbReference>
<dbReference type="GO" id="GO:0003723">
    <property type="term" value="F:RNA binding"/>
    <property type="evidence" value="ECO:0007005"/>
    <property type="project" value="UniProtKB"/>
</dbReference>
<dbReference type="GO" id="GO:0061630">
    <property type="term" value="F:ubiquitin protein ligase activity"/>
    <property type="evidence" value="ECO:0000314"/>
    <property type="project" value="UniProtKB"/>
</dbReference>
<dbReference type="GO" id="GO:0004842">
    <property type="term" value="F:ubiquitin-protein transferase activity"/>
    <property type="evidence" value="ECO:0000304"/>
    <property type="project" value="Reactome"/>
</dbReference>
<dbReference type="GO" id="GO:0008270">
    <property type="term" value="F:zinc ion binding"/>
    <property type="evidence" value="ECO:0007669"/>
    <property type="project" value="UniProtKB-KW"/>
</dbReference>
<dbReference type="GO" id="GO:0051607">
    <property type="term" value="P:defense response to virus"/>
    <property type="evidence" value="ECO:0000314"/>
    <property type="project" value="UniProtKB"/>
</dbReference>
<dbReference type="GO" id="GO:0045087">
    <property type="term" value="P:innate immune response"/>
    <property type="evidence" value="ECO:0000318"/>
    <property type="project" value="GO_Central"/>
</dbReference>
<dbReference type="GO" id="GO:0045089">
    <property type="term" value="P:positive regulation of innate immune response"/>
    <property type="evidence" value="ECO:0000314"/>
    <property type="project" value="UniProt"/>
</dbReference>
<dbReference type="GO" id="GO:0032728">
    <property type="term" value="P:positive regulation of interferon-beta production"/>
    <property type="evidence" value="ECO:0000250"/>
    <property type="project" value="UniProtKB"/>
</dbReference>
<dbReference type="GO" id="GO:1901224">
    <property type="term" value="P:positive regulation of non-canonical NF-kappaB signal transduction"/>
    <property type="evidence" value="ECO:0000314"/>
    <property type="project" value="UniProt"/>
</dbReference>
<dbReference type="GO" id="GO:0060340">
    <property type="term" value="P:positive regulation of type I interferon-mediated signaling pathway"/>
    <property type="evidence" value="ECO:0000314"/>
    <property type="project" value="UniProtKB"/>
</dbReference>
<dbReference type="GO" id="GO:0070534">
    <property type="term" value="P:protein K63-linked ubiquitination"/>
    <property type="evidence" value="ECO:0000250"/>
    <property type="project" value="UniProtKB"/>
</dbReference>
<dbReference type="GO" id="GO:0006513">
    <property type="term" value="P:protein monoubiquitination"/>
    <property type="evidence" value="ECO:0000314"/>
    <property type="project" value="UniProtKB"/>
</dbReference>
<dbReference type="GO" id="GO:0032479">
    <property type="term" value="P:regulation of type I interferon production"/>
    <property type="evidence" value="ECO:0000304"/>
    <property type="project" value="Reactome"/>
</dbReference>
<dbReference type="GO" id="GO:0034340">
    <property type="term" value="P:response to type I interferon"/>
    <property type="evidence" value="ECO:0000250"/>
    <property type="project" value="UniProtKB"/>
</dbReference>
<dbReference type="CDD" id="cd19810">
    <property type="entry name" value="Bbox1_TRIM56_C-V"/>
    <property type="match status" value="1"/>
</dbReference>
<dbReference type="CDD" id="cd19789">
    <property type="entry name" value="Bbox2_TRIM56_C-V"/>
    <property type="match status" value="1"/>
</dbReference>
<dbReference type="CDD" id="cd16584">
    <property type="entry name" value="RING-HC_TRIM56_C-V"/>
    <property type="match status" value="1"/>
</dbReference>
<dbReference type="DisProt" id="DP03063"/>
<dbReference type="FunFam" id="2.120.10.30:FF:000050">
    <property type="entry name" value="E3 ubiquitin-protein ligase TRIM56"/>
    <property type="match status" value="1"/>
</dbReference>
<dbReference type="FunFam" id="3.30.160.60:FF:001287">
    <property type="entry name" value="E3 ubiquitin-protein ligase TRIM56"/>
    <property type="match status" value="1"/>
</dbReference>
<dbReference type="FunFam" id="3.30.40.10:FF:000362">
    <property type="entry name" value="E3 ubiquitin-protein ligase TRIM56"/>
    <property type="match status" value="1"/>
</dbReference>
<dbReference type="Gene3D" id="3.30.160.60">
    <property type="entry name" value="Classic Zinc Finger"/>
    <property type="match status" value="1"/>
</dbReference>
<dbReference type="Gene3D" id="2.120.10.30">
    <property type="entry name" value="TolB, C-terminal domain"/>
    <property type="match status" value="1"/>
</dbReference>
<dbReference type="Gene3D" id="3.30.40.10">
    <property type="entry name" value="Zinc/RING finger domain, C3HC4 (zinc finger)"/>
    <property type="match status" value="1"/>
</dbReference>
<dbReference type="InterPro" id="IPR011042">
    <property type="entry name" value="6-blade_b-propeller_TolB-like"/>
</dbReference>
<dbReference type="InterPro" id="IPR047153">
    <property type="entry name" value="TRIM45/56/19-like"/>
</dbReference>
<dbReference type="InterPro" id="IPR027370">
    <property type="entry name" value="Znf-RING_euk"/>
</dbReference>
<dbReference type="InterPro" id="IPR000315">
    <property type="entry name" value="Znf_B-box"/>
</dbReference>
<dbReference type="InterPro" id="IPR001841">
    <property type="entry name" value="Znf_RING"/>
</dbReference>
<dbReference type="InterPro" id="IPR013083">
    <property type="entry name" value="Znf_RING/FYVE/PHD"/>
</dbReference>
<dbReference type="InterPro" id="IPR017907">
    <property type="entry name" value="Znf_RING_CS"/>
</dbReference>
<dbReference type="PANTHER" id="PTHR25462">
    <property type="entry name" value="BONUS, ISOFORM C-RELATED"/>
    <property type="match status" value="1"/>
</dbReference>
<dbReference type="PANTHER" id="PTHR25462:SF299">
    <property type="entry name" value="E3 UBIQUITIN-PROTEIN LIGASE TRIM56"/>
    <property type="match status" value="1"/>
</dbReference>
<dbReference type="Pfam" id="PF00643">
    <property type="entry name" value="zf-B_box"/>
    <property type="match status" value="1"/>
</dbReference>
<dbReference type="Pfam" id="PF13445">
    <property type="entry name" value="zf-RING_UBOX"/>
    <property type="match status" value="1"/>
</dbReference>
<dbReference type="SMART" id="SM00336">
    <property type="entry name" value="BBOX"/>
    <property type="match status" value="1"/>
</dbReference>
<dbReference type="SMART" id="SM00184">
    <property type="entry name" value="RING"/>
    <property type="match status" value="1"/>
</dbReference>
<dbReference type="SUPFAM" id="SSF75011">
    <property type="entry name" value="3-carboxy-cis,cis-mucoante lactonizing enzyme"/>
    <property type="match status" value="1"/>
</dbReference>
<dbReference type="SUPFAM" id="SSF57845">
    <property type="entry name" value="B-box zinc-binding domain"/>
    <property type="match status" value="1"/>
</dbReference>
<dbReference type="SUPFAM" id="SSF57850">
    <property type="entry name" value="RING/U-box"/>
    <property type="match status" value="1"/>
</dbReference>
<dbReference type="PROSITE" id="PS50119">
    <property type="entry name" value="ZF_BBOX"/>
    <property type="match status" value="1"/>
</dbReference>
<dbReference type="PROSITE" id="PS00518">
    <property type="entry name" value="ZF_RING_1"/>
    <property type="match status" value="1"/>
</dbReference>
<dbReference type="PROSITE" id="PS50089">
    <property type="entry name" value="ZF_RING_2"/>
    <property type="match status" value="1"/>
</dbReference>
<gene>
    <name evidence="14 16" type="primary">TRIM56</name>
    <name type="synonym">RNF109</name>
</gene>
<evidence type="ECO:0000250" key="1">
    <source>
        <dbReference type="UniProtKB" id="Q80VI1"/>
    </source>
</evidence>
<evidence type="ECO:0000255" key="2"/>
<evidence type="ECO:0000255" key="3">
    <source>
        <dbReference type="PROSITE-ProRule" id="PRU00024"/>
    </source>
</evidence>
<evidence type="ECO:0000255" key="4">
    <source>
        <dbReference type="PROSITE-ProRule" id="PRU00175"/>
    </source>
</evidence>
<evidence type="ECO:0000256" key="5">
    <source>
        <dbReference type="SAM" id="MobiDB-lite"/>
    </source>
</evidence>
<evidence type="ECO:0000269" key="6">
    <source>
    </source>
</evidence>
<evidence type="ECO:0000269" key="7">
    <source>
    </source>
</evidence>
<evidence type="ECO:0000269" key="8">
    <source>
    </source>
</evidence>
<evidence type="ECO:0000269" key="9">
    <source>
    </source>
</evidence>
<evidence type="ECO:0000269" key="10">
    <source>
    </source>
</evidence>
<evidence type="ECO:0000269" key="11">
    <source>
    </source>
</evidence>
<evidence type="ECO:0000303" key="12">
    <source>
    </source>
</evidence>
<evidence type="ECO:0000303" key="13">
    <source>
    </source>
</evidence>
<evidence type="ECO:0000303" key="14">
    <source>
    </source>
</evidence>
<evidence type="ECO:0000305" key="15"/>
<evidence type="ECO:0000312" key="16">
    <source>
        <dbReference type="HGNC" id="HGNC:19028"/>
    </source>
</evidence>
<evidence type="ECO:0007744" key="17">
    <source>
        <dbReference type="PDB" id="5JW7"/>
    </source>
</evidence>
<evidence type="ECO:0007744" key="18">
    <source>
    </source>
</evidence>
<evidence type="ECO:0007744" key="19">
    <source>
    </source>
</evidence>
<evidence type="ECO:0007744" key="20">
    <source>
    </source>
</evidence>
<evidence type="ECO:0007744" key="21">
    <source>
    </source>
</evidence>
<evidence type="ECO:0007829" key="22">
    <source>
        <dbReference type="PDB" id="5JW7"/>
    </source>
</evidence>
<proteinExistence type="evidence at protein level"/>